<feature type="signal peptide" evidence="2">
    <location>
        <begin position="1"/>
        <end position="23"/>
    </location>
</feature>
<feature type="chain" id="PRO_0000379636" description="Putative defensin-like protein 56">
    <location>
        <begin position="24"/>
        <end position="81"/>
    </location>
</feature>
<feature type="disulfide bond" evidence="1">
    <location>
        <begin position="46"/>
        <end position="80"/>
    </location>
</feature>
<feature type="disulfide bond" evidence="1">
    <location>
        <begin position="50"/>
        <end position="73"/>
    </location>
</feature>
<feature type="disulfide bond" evidence="1">
    <location>
        <begin position="59"/>
        <end position="78"/>
    </location>
</feature>
<feature type="disulfide bond" evidence="1">
    <location>
        <begin position="63"/>
        <end position="79"/>
    </location>
</feature>
<gene>
    <name type="ordered locus">At2g03936</name>
    <name type="ORF">F3C11</name>
</gene>
<protein>
    <recommendedName>
        <fullName>Putative defensin-like protein 56</fullName>
    </recommendedName>
</protein>
<evidence type="ECO:0000250" key="1"/>
<evidence type="ECO:0000255" key="2"/>
<evidence type="ECO:0000305" key="3"/>
<comment type="subcellular location">
    <subcellularLocation>
        <location evidence="1">Secreted</location>
    </subcellularLocation>
</comment>
<comment type="similarity">
    <text evidence="3">Belongs to the DEFL family.</text>
</comment>
<accession>Q2V4A6</accession>
<sequence length="81" mass="9114">MNITKAYVIFFLVVILTNSLSNSDVLASSDIYICVTVIETTKNDVCSTPCTIRYGTFECFHDCILEHYRDGNCINGRCCCK</sequence>
<organism>
    <name type="scientific">Arabidopsis thaliana</name>
    <name type="common">Mouse-ear cress</name>
    <dbReference type="NCBI Taxonomy" id="3702"/>
    <lineage>
        <taxon>Eukaryota</taxon>
        <taxon>Viridiplantae</taxon>
        <taxon>Streptophyta</taxon>
        <taxon>Embryophyta</taxon>
        <taxon>Tracheophyta</taxon>
        <taxon>Spermatophyta</taxon>
        <taxon>Magnoliopsida</taxon>
        <taxon>eudicotyledons</taxon>
        <taxon>Gunneridae</taxon>
        <taxon>Pentapetalae</taxon>
        <taxon>rosids</taxon>
        <taxon>malvids</taxon>
        <taxon>Brassicales</taxon>
        <taxon>Brassicaceae</taxon>
        <taxon>Camelineae</taxon>
        <taxon>Arabidopsis</taxon>
    </lineage>
</organism>
<name>DEF56_ARATH</name>
<keyword id="KW-0929">Antimicrobial</keyword>
<keyword id="KW-1015">Disulfide bond</keyword>
<keyword id="KW-0295">Fungicide</keyword>
<keyword id="KW-0611">Plant defense</keyword>
<keyword id="KW-1185">Reference proteome</keyword>
<keyword id="KW-0964">Secreted</keyword>
<keyword id="KW-0732">Signal</keyword>
<reference key="1">
    <citation type="journal article" date="1999" name="Nature">
        <title>Sequence and analysis of chromosome 2 of the plant Arabidopsis thaliana.</title>
        <authorList>
            <person name="Lin X."/>
            <person name="Kaul S."/>
            <person name="Rounsley S.D."/>
            <person name="Shea T.P."/>
            <person name="Benito M.-I."/>
            <person name="Town C.D."/>
            <person name="Fujii C.Y."/>
            <person name="Mason T.M."/>
            <person name="Bowman C.L."/>
            <person name="Barnstead M.E."/>
            <person name="Feldblyum T.V."/>
            <person name="Buell C.R."/>
            <person name="Ketchum K.A."/>
            <person name="Lee J.J."/>
            <person name="Ronning C.M."/>
            <person name="Koo H.L."/>
            <person name="Moffat K.S."/>
            <person name="Cronin L.A."/>
            <person name="Shen M."/>
            <person name="Pai G."/>
            <person name="Van Aken S."/>
            <person name="Umayam L."/>
            <person name="Tallon L.J."/>
            <person name="Gill J.E."/>
            <person name="Adams M.D."/>
            <person name="Carrera A.J."/>
            <person name="Creasy T.H."/>
            <person name="Goodman H.M."/>
            <person name="Somerville C.R."/>
            <person name="Copenhaver G.P."/>
            <person name="Preuss D."/>
            <person name="Nierman W.C."/>
            <person name="White O."/>
            <person name="Eisen J.A."/>
            <person name="Salzberg S.L."/>
            <person name="Fraser C.M."/>
            <person name="Venter J.C."/>
        </authorList>
    </citation>
    <scope>NUCLEOTIDE SEQUENCE [LARGE SCALE GENOMIC DNA]</scope>
    <source>
        <strain>cv. Columbia</strain>
    </source>
</reference>
<reference key="2">
    <citation type="journal article" date="2017" name="Plant J.">
        <title>Araport11: a complete reannotation of the Arabidopsis thaliana reference genome.</title>
        <authorList>
            <person name="Cheng C.Y."/>
            <person name="Krishnakumar V."/>
            <person name="Chan A.P."/>
            <person name="Thibaud-Nissen F."/>
            <person name="Schobel S."/>
            <person name="Town C.D."/>
        </authorList>
    </citation>
    <scope>GENOME REANNOTATION</scope>
    <source>
        <strain>cv. Columbia</strain>
    </source>
</reference>
<reference key="3">
    <citation type="journal article" date="2005" name="Plant Physiol.">
        <title>Genome organization of more than 300 defensin-like genes in Arabidopsis.</title>
        <authorList>
            <person name="Silverstein K.A.T."/>
            <person name="Graham M.A."/>
            <person name="Paape T.D."/>
            <person name="VandenBosch K.A."/>
        </authorList>
    </citation>
    <scope>GENE FAMILY</scope>
</reference>
<dbReference type="EMBL" id="AC007167">
    <property type="status" value="NOT_ANNOTATED_CDS"/>
    <property type="molecule type" value="Genomic_DNA"/>
</dbReference>
<dbReference type="EMBL" id="CP002685">
    <property type="protein sequence ID" value="AEC05771.1"/>
    <property type="molecule type" value="Genomic_DNA"/>
</dbReference>
<dbReference type="RefSeq" id="NP_001031311.1">
    <property type="nucleotide sequence ID" value="NM_001036234.1"/>
</dbReference>
<dbReference type="PaxDb" id="3702-AT2G03936.1"/>
<dbReference type="EnsemblPlants" id="AT2G03936.1">
    <property type="protein sequence ID" value="AT2G03936.1"/>
    <property type="gene ID" value="AT2G03936"/>
</dbReference>
<dbReference type="GeneID" id="3768674"/>
<dbReference type="Gramene" id="AT2G03936.1">
    <property type="protein sequence ID" value="AT2G03936.1"/>
    <property type="gene ID" value="AT2G03936"/>
</dbReference>
<dbReference type="KEGG" id="ath:AT2G03936"/>
<dbReference type="Araport" id="AT2G03936"/>
<dbReference type="TAIR" id="AT2G03936"/>
<dbReference type="HOGENOM" id="CLU_165205_2_0_1"/>
<dbReference type="InParanoid" id="Q2V4A6"/>
<dbReference type="OMA" id="DCFLEDF"/>
<dbReference type="PhylomeDB" id="Q2V4A6"/>
<dbReference type="PRO" id="PR:Q2V4A6"/>
<dbReference type="Proteomes" id="UP000006548">
    <property type="component" value="Chromosome 2"/>
</dbReference>
<dbReference type="ExpressionAtlas" id="Q2V4A6">
    <property type="expression patterns" value="baseline"/>
</dbReference>
<dbReference type="GO" id="GO:0005576">
    <property type="term" value="C:extracellular region"/>
    <property type="evidence" value="ECO:0007669"/>
    <property type="project" value="UniProtKB-SubCell"/>
</dbReference>
<dbReference type="GO" id="GO:0050832">
    <property type="term" value="P:defense response to fungus"/>
    <property type="evidence" value="ECO:0007669"/>
    <property type="project" value="UniProtKB-KW"/>
</dbReference>
<dbReference type="GO" id="GO:0031640">
    <property type="term" value="P:killing of cells of another organism"/>
    <property type="evidence" value="ECO:0007669"/>
    <property type="project" value="UniProtKB-KW"/>
</dbReference>
<dbReference type="InterPro" id="IPR056373">
    <property type="entry name" value="Defensin-like_dom"/>
</dbReference>
<dbReference type="Pfam" id="PF24552">
    <property type="entry name" value="Defensin"/>
    <property type="match status" value="1"/>
</dbReference>
<proteinExistence type="inferred from homology"/>